<comment type="function">
    <text evidence="1">Binds to the 23S rRNA.</text>
</comment>
<comment type="similarity">
    <text evidence="1">Belongs to the bacterial ribosomal protein bL9 family.</text>
</comment>
<gene>
    <name evidence="1" type="primary">rplI</name>
    <name type="ordered locus">FRAAL6850</name>
</gene>
<proteinExistence type="inferred from homology"/>
<dbReference type="EMBL" id="CT573213">
    <property type="protein sequence ID" value="CAJ65473.1"/>
    <property type="molecule type" value="Genomic_DNA"/>
</dbReference>
<dbReference type="RefSeq" id="WP_011607885.1">
    <property type="nucleotide sequence ID" value="NC_008278.1"/>
</dbReference>
<dbReference type="SMR" id="Q0RAR7"/>
<dbReference type="STRING" id="326424.FRAAL6850"/>
<dbReference type="KEGG" id="fal:FRAAL6850"/>
<dbReference type="eggNOG" id="COG0359">
    <property type="taxonomic scope" value="Bacteria"/>
</dbReference>
<dbReference type="HOGENOM" id="CLU_078938_5_1_11"/>
<dbReference type="OrthoDB" id="9788336at2"/>
<dbReference type="Proteomes" id="UP000000657">
    <property type="component" value="Chromosome"/>
</dbReference>
<dbReference type="GO" id="GO:1990904">
    <property type="term" value="C:ribonucleoprotein complex"/>
    <property type="evidence" value="ECO:0007669"/>
    <property type="project" value="UniProtKB-KW"/>
</dbReference>
<dbReference type="GO" id="GO:0005840">
    <property type="term" value="C:ribosome"/>
    <property type="evidence" value="ECO:0007669"/>
    <property type="project" value="UniProtKB-KW"/>
</dbReference>
<dbReference type="GO" id="GO:0019843">
    <property type="term" value="F:rRNA binding"/>
    <property type="evidence" value="ECO:0007669"/>
    <property type="project" value="UniProtKB-UniRule"/>
</dbReference>
<dbReference type="GO" id="GO:0003735">
    <property type="term" value="F:structural constituent of ribosome"/>
    <property type="evidence" value="ECO:0007669"/>
    <property type="project" value="InterPro"/>
</dbReference>
<dbReference type="GO" id="GO:0006412">
    <property type="term" value="P:translation"/>
    <property type="evidence" value="ECO:0007669"/>
    <property type="project" value="UniProtKB-UniRule"/>
</dbReference>
<dbReference type="FunFam" id="3.40.5.10:FF:000003">
    <property type="entry name" value="50S ribosomal protein L9"/>
    <property type="match status" value="1"/>
</dbReference>
<dbReference type="Gene3D" id="3.10.430.100">
    <property type="entry name" value="Ribosomal protein L9, C-terminal domain"/>
    <property type="match status" value="1"/>
</dbReference>
<dbReference type="Gene3D" id="3.40.5.10">
    <property type="entry name" value="Ribosomal protein L9, N-terminal domain"/>
    <property type="match status" value="1"/>
</dbReference>
<dbReference type="HAMAP" id="MF_00503">
    <property type="entry name" value="Ribosomal_bL9"/>
    <property type="match status" value="1"/>
</dbReference>
<dbReference type="InterPro" id="IPR000244">
    <property type="entry name" value="Ribosomal_bL9"/>
</dbReference>
<dbReference type="InterPro" id="IPR009027">
    <property type="entry name" value="Ribosomal_bL9/RNase_H1_N"/>
</dbReference>
<dbReference type="InterPro" id="IPR020594">
    <property type="entry name" value="Ribosomal_bL9_bac/chp"/>
</dbReference>
<dbReference type="InterPro" id="IPR020069">
    <property type="entry name" value="Ribosomal_bL9_C"/>
</dbReference>
<dbReference type="InterPro" id="IPR036791">
    <property type="entry name" value="Ribosomal_bL9_C_sf"/>
</dbReference>
<dbReference type="InterPro" id="IPR020070">
    <property type="entry name" value="Ribosomal_bL9_N"/>
</dbReference>
<dbReference type="InterPro" id="IPR036935">
    <property type="entry name" value="Ribosomal_bL9_N_sf"/>
</dbReference>
<dbReference type="NCBIfam" id="TIGR00158">
    <property type="entry name" value="L9"/>
    <property type="match status" value="1"/>
</dbReference>
<dbReference type="PANTHER" id="PTHR21368">
    <property type="entry name" value="50S RIBOSOMAL PROTEIN L9"/>
    <property type="match status" value="1"/>
</dbReference>
<dbReference type="Pfam" id="PF03948">
    <property type="entry name" value="Ribosomal_L9_C"/>
    <property type="match status" value="1"/>
</dbReference>
<dbReference type="Pfam" id="PF01281">
    <property type="entry name" value="Ribosomal_L9_N"/>
    <property type="match status" value="1"/>
</dbReference>
<dbReference type="SUPFAM" id="SSF55658">
    <property type="entry name" value="L9 N-domain-like"/>
    <property type="match status" value="1"/>
</dbReference>
<dbReference type="SUPFAM" id="SSF55653">
    <property type="entry name" value="Ribosomal protein L9 C-domain"/>
    <property type="match status" value="1"/>
</dbReference>
<dbReference type="PROSITE" id="PS00651">
    <property type="entry name" value="RIBOSOMAL_L9"/>
    <property type="match status" value="1"/>
</dbReference>
<organism>
    <name type="scientific">Frankia alni (strain DSM 45986 / CECT 9034 / ACN14a)</name>
    <dbReference type="NCBI Taxonomy" id="326424"/>
    <lineage>
        <taxon>Bacteria</taxon>
        <taxon>Bacillati</taxon>
        <taxon>Actinomycetota</taxon>
        <taxon>Actinomycetes</taxon>
        <taxon>Frankiales</taxon>
        <taxon>Frankiaceae</taxon>
        <taxon>Frankia</taxon>
    </lineage>
</organism>
<reference key="1">
    <citation type="journal article" date="2007" name="Genome Res.">
        <title>Genome characteristics of facultatively symbiotic Frankia sp. strains reflect host range and host plant biogeography.</title>
        <authorList>
            <person name="Normand P."/>
            <person name="Lapierre P."/>
            <person name="Tisa L.S."/>
            <person name="Gogarten J.P."/>
            <person name="Alloisio N."/>
            <person name="Bagnarol E."/>
            <person name="Bassi C.A."/>
            <person name="Berry A.M."/>
            <person name="Bickhart D.M."/>
            <person name="Choisne N."/>
            <person name="Couloux A."/>
            <person name="Cournoyer B."/>
            <person name="Cruveiller S."/>
            <person name="Daubin V."/>
            <person name="Demange N."/>
            <person name="Francino M.P."/>
            <person name="Goltsman E."/>
            <person name="Huang Y."/>
            <person name="Kopp O.R."/>
            <person name="Labarre L."/>
            <person name="Lapidus A."/>
            <person name="Lavire C."/>
            <person name="Marechal J."/>
            <person name="Martinez M."/>
            <person name="Mastronunzio J.E."/>
            <person name="Mullin B.C."/>
            <person name="Niemann J."/>
            <person name="Pujic P."/>
            <person name="Rawnsley T."/>
            <person name="Rouy Z."/>
            <person name="Schenowitz C."/>
            <person name="Sellstedt A."/>
            <person name="Tavares F."/>
            <person name="Tomkins J.P."/>
            <person name="Vallenet D."/>
            <person name="Valverde C."/>
            <person name="Wall L.G."/>
            <person name="Wang Y."/>
            <person name="Medigue C."/>
            <person name="Benson D.R."/>
        </authorList>
    </citation>
    <scope>NUCLEOTIDE SEQUENCE [LARGE SCALE GENOMIC DNA]</scope>
    <source>
        <strain>DSM 45986 / CECT 9034 / ACN14a</strain>
    </source>
</reference>
<protein>
    <recommendedName>
        <fullName evidence="1">Large ribosomal subunit protein bL9</fullName>
    </recommendedName>
    <alternativeName>
        <fullName evidence="2">50S ribosomal protein L9</fullName>
    </alternativeName>
</protein>
<evidence type="ECO:0000255" key="1">
    <source>
        <dbReference type="HAMAP-Rule" id="MF_00503"/>
    </source>
</evidence>
<evidence type="ECO:0000305" key="2"/>
<name>RL9_FRAAA</name>
<feature type="chain" id="PRO_1000014778" description="Large ribosomal subunit protein bL9">
    <location>
        <begin position="1"/>
        <end position="148"/>
    </location>
</feature>
<keyword id="KW-1185">Reference proteome</keyword>
<keyword id="KW-0687">Ribonucleoprotein</keyword>
<keyword id="KW-0689">Ribosomal protein</keyword>
<keyword id="KW-0694">RNA-binding</keyword>
<keyword id="KW-0699">rRNA-binding</keyword>
<accession>Q0RAR7</accession>
<sequence>MKLILTQEVPGLGSPGDIVEVANGYGRNYLVPRKYAILATKGAERQVEQIKRARSARAVRDLGHAQEIAGQLGGLKVELISRAGKEGRLFGSVTAADVVEAVTAAGGPELDRRRVELTTPIKSLGAYTVAVHLHPEVTASVKLQVKKA</sequence>